<accession>Q2S3Q1</accession>
<sequence length="89" mass="10902">MAKKSWIAREEKRERLYEKHKEERRRLKEEEKWVELQKLPRDSSPVRQNNRCELCGRQRGYLRKFGVCRICFRELALEGKIPGIRKASW</sequence>
<protein>
    <recommendedName>
        <fullName evidence="2">Small ribosomal subunit protein uS14</fullName>
    </recommendedName>
    <alternativeName>
        <fullName>30S ribosomal protein S14</fullName>
    </alternativeName>
</protein>
<evidence type="ECO:0000250" key="1"/>
<evidence type="ECO:0000305" key="2"/>
<dbReference type="EMBL" id="CP000159">
    <property type="protein sequence ID" value="ABC46092.1"/>
    <property type="molecule type" value="Genomic_DNA"/>
</dbReference>
<dbReference type="RefSeq" id="WP_011403808.1">
    <property type="nucleotide sequence ID" value="NC_007677.1"/>
</dbReference>
<dbReference type="RefSeq" id="YP_445180.1">
    <property type="nucleotide sequence ID" value="NC_007677.1"/>
</dbReference>
<dbReference type="SMR" id="Q2S3Q1"/>
<dbReference type="STRING" id="309807.SRU_1048"/>
<dbReference type="EnsemblBacteria" id="ABC46092">
    <property type="protein sequence ID" value="ABC46092"/>
    <property type="gene ID" value="SRU_1048"/>
</dbReference>
<dbReference type="GeneID" id="83727977"/>
<dbReference type="KEGG" id="sru:SRU_1048"/>
<dbReference type="PATRIC" id="fig|309807.25.peg.1086"/>
<dbReference type="eggNOG" id="COG0199">
    <property type="taxonomic scope" value="Bacteria"/>
</dbReference>
<dbReference type="HOGENOM" id="CLU_139869_0_0_10"/>
<dbReference type="OrthoDB" id="9810484at2"/>
<dbReference type="Proteomes" id="UP000008674">
    <property type="component" value="Chromosome"/>
</dbReference>
<dbReference type="GO" id="GO:0005737">
    <property type="term" value="C:cytoplasm"/>
    <property type="evidence" value="ECO:0007669"/>
    <property type="project" value="UniProtKB-ARBA"/>
</dbReference>
<dbReference type="GO" id="GO:0015935">
    <property type="term" value="C:small ribosomal subunit"/>
    <property type="evidence" value="ECO:0007669"/>
    <property type="project" value="TreeGrafter"/>
</dbReference>
<dbReference type="GO" id="GO:0046872">
    <property type="term" value="F:metal ion binding"/>
    <property type="evidence" value="ECO:0007669"/>
    <property type="project" value="UniProtKB-KW"/>
</dbReference>
<dbReference type="GO" id="GO:0019843">
    <property type="term" value="F:rRNA binding"/>
    <property type="evidence" value="ECO:0007669"/>
    <property type="project" value="UniProtKB-UniRule"/>
</dbReference>
<dbReference type="GO" id="GO:0003735">
    <property type="term" value="F:structural constituent of ribosome"/>
    <property type="evidence" value="ECO:0007669"/>
    <property type="project" value="InterPro"/>
</dbReference>
<dbReference type="GO" id="GO:0006412">
    <property type="term" value="P:translation"/>
    <property type="evidence" value="ECO:0007669"/>
    <property type="project" value="UniProtKB-UniRule"/>
</dbReference>
<dbReference type="Gene3D" id="4.10.830.10">
    <property type="entry name" value="30s Ribosomal Protein S14, Chain N"/>
    <property type="match status" value="1"/>
</dbReference>
<dbReference type="HAMAP" id="MF_00537">
    <property type="entry name" value="Ribosomal_uS14_1"/>
    <property type="match status" value="1"/>
</dbReference>
<dbReference type="InterPro" id="IPR001209">
    <property type="entry name" value="Ribosomal_uS14"/>
</dbReference>
<dbReference type="InterPro" id="IPR023036">
    <property type="entry name" value="Ribosomal_uS14_bac/plastid"/>
</dbReference>
<dbReference type="InterPro" id="IPR023053">
    <property type="entry name" value="Ribosomal_uS14_bact"/>
</dbReference>
<dbReference type="InterPro" id="IPR018271">
    <property type="entry name" value="Ribosomal_uS14_CS"/>
</dbReference>
<dbReference type="InterPro" id="IPR043140">
    <property type="entry name" value="Ribosomal_uS14_sf"/>
</dbReference>
<dbReference type="NCBIfam" id="NF005974">
    <property type="entry name" value="PRK08061.1"/>
    <property type="match status" value="1"/>
</dbReference>
<dbReference type="NCBIfam" id="NF006477">
    <property type="entry name" value="PRK08881.1"/>
    <property type="match status" value="1"/>
</dbReference>
<dbReference type="PANTHER" id="PTHR19836">
    <property type="entry name" value="30S RIBOSOMAL PROTEIN S14"/>
    <property type="match status" value="1"/>
</dbReference>
<dbReference type="PANTHER" id="PTHR19836:SF19">
    <property type="entry name" value="SMALL RIBOSOMAL SUBUNIT PROTEIN US14M"/>
    <property type="match status" value="1"/>
</dbReference>
<dbReference type="Pfam" id="PF00253">
    <property type="entry name" value="Ribosomal_S14"/>
    <property type="match status" value="1"/>
</dbReference>
<dbReference type="SUPFAM" id="SSF57716">
    <property type="entry name" value="Glucocorticoid receptor-like (DNA-binding domain)"/>
    <property type="match status" value="1"/>
</dbReference>
<dbReference type="PROSITE" id="PS00527">
    <property type="entry name" value="RIBOSOMAL_S14"/>
    <property type="match status" value="1"/>
</dbReference>
<gene>
    <name type="primary">rpsN</name>
    <name type="synonym">rpsZ</name>
    <name type="ordered locus">SRU_1048</name>
</gene>
<reference key="1">
    <citation type="journal article" date="2005" name="Proc. Natl. Acad. Sci. U.S.A.">
        <title>The genome of Salinibacter ruber: convergence and gene exchange among hyperhalophilic bacteria and archaea.</title>
        <authorList>
            <person name="Mongodin E.F."/>
            <person name="Nelson K.E."/>
            <person name="Daugherty S."/>
            <person name="DeBoy R.T."/>
            <person name="Wister J."/>
            <person name="Khouri H."/>
            <person name="Weidman J."/>
            <person name="Walsh D.A."/>
            <person name="Papke R.T."/>
            <person name="Sanchez Perez G."/>
            <person name="Sharma A.K."/>
            <person name="Nesbo C.L."/>
            <person name="MacLeod D."/>
            <person name="Bapteste E."/>
            <person name="Doolittle W.F."/>
            <person name="Charlebois R.L."/>
            <person name="Legault B."/>
            <person name="Rodriguez-Valera F."/>
        </authorList>
    </citation>
    <scope>NUCLEOTIDE SEQUENCE [LARGE SCALE GENOMIC DNA]</scope>
    <source>
        <strain>DSM 13855 / CECT 5946 / M31</strain>
    </source>
</reference>
<comment type="function">
    <text evidence="1">Binds 16S rRNA, required for the assembly of 30S particles and may also be responsible for determining the conformation of the 16S rRNA at the A site.</text>
</comment>
<comment type="cofactor">
    <cofactor evidence="2">
        <name>Zn(2+)</name>
        <dbReference type="ChEBI" id="CHEBI:29105"/>
    </cofactor>
    <text evidence="2">Binds 1 zinc ion per subunit.</text>
</comment>
<comment type="subunit">
    <text evidence="1">Part of the 30S ribosomal subunit. Contacts proteins S3 and S10 (By similarity).</text>
</comment>
<comment type="similarity">
    <text evidence="2">Belongs to the universal ribosomal protein uS14 family.</text>
</comment>
<comment type="caution">
    <text evidence="2">This protein has the conserved residues necessary to bind a zinc ion as do the zinc-binding member of this family, but it is not clear if does so.</text>
</comment>
<proteinExistence type="inferred from homology"/>
<name>RS14_SALRD</name>
<keyword id="KW-0479">Metal-binding</keyword>
<keyword id="KW-1185">Reference proteome</keyword>
<keyword id="KW-0687">Ribonucleoprotein</keyword>
<keyword id="KW-0689">Ribosomal protein</keyword>
<keyword id="KW-0694">RNA-binding</keyword>
<keyword id="KW-0699">rRNA-binding</keyword>
<keyword id="KW-0862">Zinc</keyword>
<organism>
    <name type="scientific">Salinibacter ruber (strain DSM 13855 / M31)</name>
    <dbReference type="NCBI Taxonomy" id="309807"/>
    <lineage>
        <taxon>Bacteria</taxon>
        <taxon>Pseudomonadati</taxon>
        <taxon>Rhodothermota</taxon>
        <taxon>Rhodothermia</taxon>
        <taxon>Rhodothermales</taxon>
        <taxon>Salinibacteraceae</taxon>
        <taxon>Salinibacter</taxon>
    </lineage>
</organism>
<feature type="chain" id="PRO_1000128565" description="Small ribosomal subunit protein uS14">
    <location>
        <begin position="1"/>
        <end position="89"/>
    </location>
</feature>
<feature type="binding site" evidence="1">
    <location>
        <position position="52"/>
    </location>
    <ligand>
        <name>Zn(2+)</name>
        <dbReference type="ChEBI" id="CHEBI:29105"/>
    </ligand>
</feature>
<feature type="binding site" evidence="1">
    <location>
        <position position="55"/>
    </location>
    <ligand>
        <name>Zn(2+)</name>
        <dbReference type="ChEBI" id="CHEBI:29105"/>
    </ligand>
</feature>
<feature type="binding site" evidence="1">
    <location>
        <position position="68"/>
    </location>
    <ligand>
        <name>Zn(2+)</name>
        <dbReference type="ChEBI" id="CHEBI:29105"/>
    </ligand>
</feature>
<feature type="binding site" evidence="1">
    <location>
        <position position="71"/>
    </location>
    <ligand>
        <name>Zn(2+)</name>
        <dbReference type="ChEBI" id="CHEBI:29105"/>
    </ligand>
</feature>